<organism>
    <name type="scientific">Salmonella dublin (strain CT_02021853)</name>
    <dbReference type="NCBI Taxonomy" id="439851"/>
    <lineage>
        <taxon>Bacteria</taxon>
        <taxon>Pseudomonadati</taxon>
        <taxon>Pseudomonadota</taxon>
        <taxon>Gammaproteobacteria</taxon>
        <taxon>Enterobacterales</taxon>
        <taxon>Enterobacteriaceae</taxon>
        <taxon>Salmonella</taxon>
    </lineage>
</organism>
<protein>
    <recommendedName>
        <fullName evidence="1">L-rhamnonate dehydratase</fullName>
        <shortName evidence="1">RhamD</shortName>
        <ecNumber evidence="1">4.2.1.90</ecNumber>
    </recommendedName>
</protein>
<sequence length="401" mass="44119">MTLPKIKHVRAWFIGGATAEKGAGGGDYHDQGGNHWIDDHIATPMSKYRDYEQSRQSFGINVLGTLIVEVEAENGQTGFAVSTAGEMGCFIVEKHLNRFIEGKCVSDIKLIHDQMLGATMYYSGSGGLVMNTISCVDLALWDLFGKVVGLPVYKLLGGAVRDEIQFYATGARPDLAKEMGFIGGKMPTHWGPHDGDAGIRKDAAMVADMREKCGPDFWLMLDCWMSQDVNYATKLAHACAPFNLKWIEECLPPQQYEGYRELKRNAPAGMMVTSGEHHGTLQSFRTLAETGIDIMQPDVGWCGGLTTLVEIAALAKSRGQLVVPHGSSVYSHHAVITFTNTPFSEFLMTSPDCSTLRPQFDPILLDEPVPVNGRIHKSVLDKPGFGVELNRDCHLKRPYSH</sequence>
<name>RHMD_SALDC</name>
<accession>B5FNT1</accession>
<dbReference type="EC" id="4.2.1.90" evidence="1"/>
<dbReference type="EMBL" id="CP001144">
    <property type="protein sequence ID" value="ACH76851.1"/>
    <property type="molecule type" value="Genomic_DNA"/>
</dbReference>
<dbReference type="RefSeq" id="WP_001530644.1">
    <property type="nucleotide sequence ID" value="NC_011205.1"/>
</dbReference>
<dbReference type="SMR" id="B5FNT1"/>
<dbReference type="KEGG" id="sed:SeD_A2635"/>
<dbReference type="HOGENOM" id="CLU_030273_1_0_6"/>
<dbReference type="Proteomes" id="UP000008322">
    <property type="component" value="Chromosome"/>
</dbReference>
<dbReference type="GO" id="GO:0050032">
    <property type="term" value="F:L-rhamnonate dehydratase activity"/>
    <property type="evidence" value="ECO:0007669"/>
    <property type="project" value="UniProtKB-UniRule"/>
</dbReference>
<dbReference type="GO" id="GO:0000287">
    <property type="term" value="F:magnesium ion binding"/>
    <property type="evidence" value="ECO:0007669"/>
    <property type="project" value="UniProtKB-UniRule"/>
</dbReference>
<dbReference type="GO" id="GO:0009063">
    <property type="term" value="P:amino acid catabolic process"/>
    <property type="evidence" value="ECO:0007669"/>
    <property type="project" value="InterPro"/>
</dbReference>
<dbReference type="GO" id="GO:0016052">
    <property type="term" value="P:carbohydrate catabolic process"/>
    <property type="evidence" value="ECO:0007669"/>
    <property type="project" value="TreeGrafter"/>
</dbReference>
<dbReference type="CDD" id="cd03327">
    <property type="entry name" value="MR_like_2"/>
    <property type="match status" value="1"/>
</dbReference>
<dbReference type="FunFam" id="3.30.390.10:FF:000007">
    <property type="entry name" value="L-rhamnonate dehydratase"/>
    <property type="match status" value="1"/>
</dbReference>
<dbReference type="FunFam" id="3.20.20.120:FF:000005">
    <property type="entry name" value="Putative L-rhamnonate dehydratase"/>
    <property type="match status" value="1"/>
</dbReference>
<dbReference type="Gene3D" id="3.20.20.120">
    <property type="entry name" value="Enolase-like C-terminal domain"/>
    <property type="match status" value="1"/>
</dbReference>
<dbReference type="Gene3D" id="3.30.390.10">
    <property type="entry name" value="Enolase-like, N-terminal domain"/>
    <property type="match status" value="1"/>
</dbReference>
<dbReference type="HAMAP" id="MF_01288">
    <property type="entry name" value="Rhamnon_dehydrat"/>
    <property type="match status" value="1"/>
</dbReference>
<dbReference type="InterPro" id="IPR036849">
    <property type="entry name" value="Enolase-like_C_sf"/>
</dbReference>
<dbReference type="InterPro" id="IPR029017">
    <property type="entry name" value="Enolase-like_N"/>
</dbReference>
<dbReference type="InterPro" id="IPR029065">
    <property type="entry name" value="Enolase_C-like"/>
</dbReference>
<dbReference type="InterPro" id="IPR023444">
    <property type="entry name" value="L-Rhamnon_dehydrat"/>
</dbReference>
<dbReference type="InterPro" id="IPR018110">
    <property type="entry name" value="Mandel_Rmase/mucon_lact_enz_CS"/>
</dbReference>
<dbReference type="InterPro" id="IPR013342">
    <property type="entry name" value="Mandelate_racemase_C"/>
</dbReference>
<dbReference type="InterPro" id="IPR013341">
    <property type="entry name" value="Mandelate_racemase_N_dom"/>
</dbReference>
<dbReference type="InterPro" id="IPR046945">
    <property type="entry name" value="RHMD-like"/>
</dbReference>
<dbReference type="NCBIfam" id="NF011968">
    <property type="entry name" value="PRK15440.1"/>
    <property type="match status" value="1"/>
</dbReference>
<dbReference type="PANTHER" id="PTHR13794">
    <property type="entry name" value="ENOLASE SUPERFAMILY, MANDELATE RACEMASE"/>
    <property type="match status" value="1"/>
</dbReference>
<dbReference type="PANTHER" id="PTHR13794:SF58">
    <property type="entry name" value="MITOCHONDRIAL ENOLASE SUPERFAMILY MEMBER 1"/>
    <property type="match status" value="1"/>
</dbReference>
<dbReference type="Pfam" id="PF13378">
    <property type="entry name" value="MR_MLE_C"/>
    <property type="match status" value="1"/>
</dbReference>
<dbReference type="Pfam" id="PF02746">
    <property type="entry name" value="MR_MLE_N"/>
    <property type="match status" value="1"/>
</dbReference>
<dbReference type="SFLD" id="SFLDG00179">
    <property type="entry name" value="mandelate_racemase"/>
    <property type="match status" value="1"/>
</dbReference>
<dbReference type="SFLD" id="SFLDF00006">
    <property type="entry name" value="rhamnonate_dehydratase"/>
    <property type="match status" value="1"/>
</dbReference>
<dbReference type="SMART" id="SM00922">
    <property type="entry name" value="MR_MLE"/>
    <property type="match status" value="1"/>
</dbReference>
<dbReference type="SUPFAM" id="SSF51604">
    <property type="entry name" value="Enolase C-terminal domain-like"/>
    <property type="match status" value="1"/>
</dbReference>
<dbReference type="SUPFAM" id="SSF54826">
    <property type="entry name" value="Enolase N-terminal domain-like"/>
    <property type="match status" value="1"/>
</dbReference>
<dbReference type="PROSITE" id="PS00908">
    <property type="entry name" value="MR_MLE_1"/>
    <property type="match status" value="1"/>
</dbReference>
<comment type="function">
    <text evidence="1">Catalyzes the dehydration of L-rhamnonate to 2-keto-3-deoxy-L-rhamnonate (KDR).</text>
</comment>
<comment type="catalytic activity">
    <reaction evidence="1">
        <text>L-rhamnonate = 2-dehydro-3-deoxy-L-rhamnonate + H2O</text>
        <dbReference type="Rhea" id="RHEA:23080"/>
        <dbReference type="ChEBI" id="CHEBI:15377"/>
        <dbReference type="ChEBI" id="CHEBI:58118"/>
        <dbReference type="ChEBI" id="CHEBI:58371"/>
        <dbReference type="EC" id="4.2.1.90"/>
    </reaction>
</comment>
<comment type="cofactor">
    <cofactor evidence="1">
        <name>Mg(2+)</name>
        <dbReference type="ChEBI" id="CHEBI:18420"/>
    </cofactor>
    <text evidence="1">Binds 1 Mg(2+) ion per subunit.</text>
</comment>
<comment type="subunit">
    <text evidence="1">Homooctamer; tetramer of dimers.</text>
</comment>
<comment type="miscellaneous">
    <text evidence="1">Reaction proceeds via a syn dehydration.</text>
</comment>
<comment type="similarity">
    <text evidence="1">Belongs to the mandelate racemase/muconate lactonizing enzyme family. RhamD subfamily.</text>
</comment>
<proteinExistence type="inferred from homology"/>
<gene>
    <name evidence="1" type="primary">rhmD</name>
    <name type="ordered locus">SeD_A2635</name>
</gene>
<keyword id="KW-0456">Lyase</keyword>
<keyword id="KW-0460">Magnesium</keyword>
<keyword id="KW-0479">Metal-binding</keyword>
<reference key="1">
    <citation type="journal article" date="2011" name="J. Bacteriol.">
        <title>Comparative genomics of 28 Salmonella enterica isolates: evidence for CRISPR-mediated adaptive sublineage evolution.</title>
        <authorList>
            <person name="Fricke W.F."/>
            <person name="Mammel M.K."/>
            <person name="McDermott P.F."/>
            <person name="Tartera C."/>
            <person name="White D.G."/>
            <person name="Leclerc J.E."/>
            <person name="Ravel J."/>
            <person name="Cebula T.A."/>
        </authorList>
    </citation>
    <scope>NUCLEOTIDE SEQUENCE [LARGE SCALE GENOMIC DNA]</scope>
    <source>
        <strain>CT_02021853</strain>
    </source>
</reference>
<feature type="chain" id="PRO_1000165263" description="L-rhamnonate dehydratase">
    <location>
        <begin position="1"/>
        <end position="401"/>
    </location>
</feature>
<feature type="active site" description="Proton acceptor" evidence="1">
    <location>
        <position position="325"/>
    </location>
</feature>
<feature type="binding site" evidence="1">
    <location>
        <position position="29"/>
    </location>
    <ligand>
        <name>substrate</name>
    </ligand>
</feature>
<feature type="binding site" evidence="1">
    <location>
        <position position="55"/>
    </location>
    <ligand>
        <name>substrate</name>
    </ligand>
</feature>
<feature type="binding site" evidence="1">
    <location>
        <position position="222"/>
    </location>
    <ligand>
        <name>Mg(2+)</name>
        <dbReference type="ChEBI" id="CHEBI:18420"/>
    </ligand>
</feature>
<feature type="binding site" evidence="1">
    <location>
        <position position="248"/>
    </location>
    <ligand>
        <name>Mg(2+)</name>
        <dbReference type="ChEBI" id="CHEBI:18420"/>
    </ligand>
</feature>
<feature type="binding site" evidence="1">
    <location>
        <position position="276"/>
    </location>
    <ligand>
        <name>Mg(2+)</name>
        <dbReference type="ChEBI" id="CHEBI:18420"/>
    </ligand>
</feature>
<feature type="binding site" evidence="1">
    <location>
        <position position="345"/>
    </location>
    <ligand>
        <name>substrate</name>
    </ligand>
</feature>
<feature type="site" description="Increases basicity of active site His" evidence="1">
    <location>
        <position position="298"/>
    </location>
</feature>
<feature type="site" description="Transition state stabilizer" evidence="1">
    <location>
        <position position="345"/>
    </location>
</feature>
<evidence type="ECO:0000255" key="1">
    <source>
        <dbReference type="HAMAP-Rule" id="MF_01288"/>
    </source>
</evidence>